<reference key="1">
    <citation type="journal article" date="2014" name="Toxicon">
        <title>The molecular diversity of toxin gene families in lethal Amanita mushrooms.</title>
        <authorList>
            <person name="Li P."/>
            <person name="Deng W."/>
            <person name="Li T."/>
        </authorList>
    </citation>
    <scope>NUCLEOTIDE SEQUENCE [GENOMIC DNA]</scope>
    <scope>FUNCTION</scope>
</reference>
<comment type="function">
    <text evidence="4">Probable toxin that belongs to the MSDIN-like toxin family responsible for a large number of food poisoning cases and deaths (PubMed:24613547).</text>
</comment>
<comment type="PTM">
    <text evidence="1">Processed by the macrocyclase-peptidase enzyme POPB to yield a toxic cyclic heptapeptide (By similarity). POPB first removes 10 residues from the N-terminus (By similarity). Conformational trapping of the remaining peptide forces the enzyme to release this intermediate rather than proceed to macrocyclization (By similarity). The enzyme rebinds the remaining peptide in a different conformation and catalyzes macrocyclization of the N-terminal 8 residues (By similarity).</text>
</comment>
<comment type="similarity">
    <text evidence="3">Belongs to the MSDIN fungal toxin family.</text>
</comment>
<name>MSD3_AMAPH</name>
<protein>
    <recommendedName>
        <fullName evidence="2">MSDIN-like toxin proprotein 3</fullName>
    </recommendedName>
    <component>
        <recommendedName>
            <fullName evidence="4">Toxin MSD3</fullName>
        </recommendedName>
    </component>
</protein>
<accession>A0A023IWK4</accession>
<organism>
    <name type="scientific">Amanita phalloides</name>
    <name type="common">Death cap</name>
    <dbReference type="NCBI Taxonomy" id="67723"/>
    <lineage>
        <taxon>Eukaryota</taxon>
        <taxon>Fungi</taxon>
        <taxon>Dikarya</taxon>
        <taxon>Basidiomycota</taxon>
        <taxon>Agaricomycotina</taxon>
        <taxon>Agaricomycetes</taxon>
        <taxon>Agaricomycetidae</taxon>
        <taxon>Agaricales</taxon>
        <taxon>Pluteineae</taxon>
        <taxon>Amanitaceae</taxon>
        <taxon>Amanita</taxon>
    </lineage>
</organism>
<feature type="propeptide" id="PRO_0000443677" evidence="4">
    <location>
        <begin position="1"/>
        <end position="10"/>
    </location>
</feature>
<feature type="peptide" id="PRO_0000443678" description="Toxin MSD3" evidence="4">
    <location>
        <begin position="11"/>
        <end position="17"/>
    </location>
</feature>
<feature type="propeptide" id="PRO_0000443679" evidence="4">
    <location>
        <begin position="18"/>
        <end position="32"/>
    </location>
</feature>
<feature type="cross-link" description="Cyclopeptide (Ser-Pro)" evidence="4">
    <location>
        <begin position="11"/>
        <end position="17"/>
    </location>
</feature>
<sequence length="32" mass="3672">MSDINATRLPSFFFPIPCISDDIEMVLTRGER</sequence>
<keyword id="KW-0800">Toxin</keyword>
<evidence type="ECO:0000250" key="1">
    <source>
        <dbReference type="UniProtKB" id="A0A067SLB9"/>
    </source>
</evidence>
<evidence type="ECO:0000303" key="2">
    <source>
    </source>
</evidence>
<evidence type="ECO:0000305" key="3"/>
<evidence type="ECO:0000305" key="4">
    <source>
    </source>
</evidence>
<dbReference type="EMBL" id="KF552081">
    <property type="protein sequence ID" value="AHB18709.1"/>
    <property type="molecule type" value="Genomic_DNA"/>
</dbReference>
<dbReference type="GO" id="GO:0090729">
    <property type="term" value="F:toxin activity"/>
    <property type="evidence" value="ECO:0007669"/>
    <property type="project" value="UniProtKB-KW"/>
</dbReference>
<dbReference type="InterPro" id="IPR027582">
    <property type="entry name" value="Amanitin/phalloidin"/>
</dbReference>
<dbReference type="NCBIfam" id="TIGR04309">
    <property type="entry name" value="amanitin"/>
    <property type="match status" value="1"/>
</dbReference>
<proteinExistence type="inferred from homology"/>